<comment type="function">
    <molecule>Capsid polyprotein VP90</molecule>
    <text evidence="3">The capsid polyprotein VP90 self-assembles and undergoes a proteolytic cleavage by host caspases to yield the immature VP70 virion.</text>
</comment>
<comment type="function">
    <molecule>Capsid polyprotein VP70</molecule>
    <text evidence="3">The immature virion is composed of 180 VP70 subunits with 90 dimeric spikes and displays a T=3 icosahedral symmetry (By similarity). During maturation, VP70 undergoes a loss of 60 peripentonal spikes, which likely plays an important role in viral infectivity (By similarity).</text>
</comment>
<comment type="function">
    <molecule>Core protein VP34</molecule>
    <text evidence="1">Self-assembles to form an icosahedral capsid with a T=3 symmetry, about 43 nm in diameter (By similarity). This forms contains only 30 spikes located on the icosahedral 2-fold axes (By similarity).</text>
</comment>
<comment type="function">
    <molecule>Spike protein VP27</molecule>
    <text evidence="1 3">VP25 and VP27 Forms the spikes at the surface of the virion (By similarity). This forms contains only 30 spikes located on the icosahedral 2-fold axes (By similarity). Plays a role in the attachment to target host cell (By similarity). This attachment induces virion internalization through clathrin-dependent endocytosis (By similarity).</text>
</comment>
<comment type="function">
    <molecule>Spike protein VP25</molecule>
    <text evidence="1 2 3">VP25 and VP27 Forms the spikes at the surface of the virion (By similarity). This forms contains only 30 spikes located on the icosahedral 2-fold axes (By similarity). Plays a role in the attachment to target host cell (By similarity). This attachment induces virion internalization through clathrin-dependent endocytosis (By similarity).</text>
</comment>
<comment type="subunit">
    <molecule>Spike protein VP25</molecule>
    <text evidence="3">Heterodimer with spike protein VP27 (By similarity). The spikes form a globular dimer with 30 spikes covering the mature virion (By similarity). Spike protein VP25 that lacks the core attachment region may need to dimerize with spike protein VP27 to remain stably bound to the viral particle (By similarity).</text>
</comment>
<comment type="subunit">
    <molecule>Spike protein VP27</molecule>
    <text evidence="3">Heterodimer with spike protein VP25 (By similarity). The spikes form a globular dimer with 30 spikes covering the mature virion (By similarity). Spike protein VP25 that lacks the core attachment region may need to dimerize with spike protein VP27 to remain stably bound to the viral particle (By similarity).</text>
</comment>
<comment type="subcellular location">
    <molecule>Capsid polyprotein VP90</molecule>
    <subcellularLocation>
        <location evidence="3">Virion</location>
    </subcellularLocation>
    <text evidence="3">Immature capsid.</text>
</comment>
<comment type="subcellular location">
    <molecule>Capsid polyprotein VP70</molecule>
    <subcellularLocation>
        <location evidence="3">Virion</location>
    </subcellularLocation>
    <text evidence="3">Immature capsid after cleavage by host caspases.</text>
</comment>
<comment type="subcellular location">
    <molecule>Core protein VP34</molecule>
    <subcellularLocation>
        <location evidence="1">Virion</location>
    </subcellularLocation>
    <text evidence="1">Capsid.</text>
</comment>
<comment type="subcellular location">
    <molecule>Spike protein VP27</molecule>
    <subcellularLocation>
        <location evidence="1">Virion</location>
    </subcellularLocation>
    <text evidence="1">Capsid.</text>
</comment>
<comment type="subcellular location">
    <molecule>Spike protein VP25</molecule>
    <subcellularLocation>
        <location evidence="1">Host extracellular space</location>
    </subcellularLocation>
    <subcellularLocation>
        <location>Virion</location>
    </subcellularLocation>
    <text evidence="1 6">Capsid (By similarity). Spike protein VP25 that lacks the core attachment region may need to dimerize with spike protein VP27 to remain stably bound to the viral particle (Probable).</text>
</comment>
<comment type="domain">
    <molecule>Spike protein VP27</molecule>
    <text evidence="3">Contains the core attachment region and the P2 globular region.</text>
</comment>
<comment type="domain">
    <molecule>Spike protein VP25</molecule>
    <text evidence="3">Contains the P2 globular region (By similarity). The core attachment region is lost by cleavage (By similarity).</text>
</comment>
<comment type="PTM">
    <molecule>Capsid polyprotein VP90</molecule>
    <text evidence="3">Specific enzymatic cleavages by the host yield mature proteins. VP90 acidic C-terminal domain is eliminated from the immature virion by host caspases during viral maturation giving rise to virions composed of VP70 (By similarity). The virus can then dissociate from cellular membranes and exit the cell (By similarity). Further cleavages by host extracellular proteases occur resulting in the three structural proteins VP34, VP27 and VP25 and conferring infectivity (By similarity).</text>
</comment>
<comment type="similarity">
    <text evidence="6">Belongs to the astroviridae capsid polyprotein family.</text>
</comment>
<organismHost>
    <name type="scientific">Homo sapiens</name>
    <name type="common">Human</name>
    <dbReference type="NCBI Taxonomy" id="9606"/>
</organismHost>
<name>CAPSD_HASV7</name>
<accession>Q96818</accession>
<proteinExistence type="inferred from homology"/>
<evidence type="ECO:0000250" key="1">
    <source>
        <dbReference type="UniProtKB" id="O12792"/>
    </source>
</evidence>
<evidence type="ECO:0000250" key="2">
    <source>
        <dbReference type="UniProtKB" id="Q82446"/>
    </source>
</evidence>
<evidence type="ECO:0000250" key="3">
    <source>
        <dbReference type="UniProtKB" id="Q9IFX1"/>
    </source>
</evidence>
<evidence type="ECO:0000255" key="4"/>
<evidence type="ECO:0000256" key="5">
    <source>
        <dbReference type="SAM" id="MobiDB-lite"/>
    </source>
</evidence>
<evidence type="ECO:0000305" key="6"/>
<sequence length="791" mass="86569">MASKSDKQVTVEVNNNNGRSRSRSRGRSQSRGRGRSFKITVNSKNRGRRQNGRNKLQSNQRVRNIVNKQLRKQGVTGPKPAICQRATATLGTIGSNTSGSTEIEACILLNPVLVKDATGSTQFGPVQALGAQYSMWKLKYLNVKLTSMVGSSAVNGTAVRISLNPTSTPSSTSWSGLGARKHLDVTVGKNAVFRLKPADLGGPRDGWWLTNTNDNASDTLGPSIEIHTLGKTMSSYLNQQFTGGLFLVELASEWCFTGYAANPNLVNLMKSTDKQVNVSFEGDNGTPLIMKVPDTSHFARTAVARSSLPTTLARAGQNTTSDTVWQVLNTAVSAAEIVTPPPFNWLIKGGWWFVKLIAGRSRAGMRSFYVYPSYQDALSNKPALCTGSVPGGMRVRAAIPTTLQFTQMNQPSLGHGEVTATLGRSIPTPGDTFKVVLTIGQPLAPNTLNNQTWVNKTTTAPQGQHVVKIAKDTSNYTTMQGFTPISNVTWYTEDFQPSEEPPPISGLQVLVDSRKKADVYAVQQYLNHPSNTKDQLTSIFLVKVTTSFQVNNHLSYFYRAAGTGTAVENFKIRGATSEQNISFSEGWYLMTNTATFNPPAPPGWIWKNVELDNNTPYIVDQGMMHLIMSPPVGTQLLFEMKTTVSGTRNVSHFDHDENPSPVWCDALDAADVWELPTETDTESEEDEDEDDEADRFDLHSSYGSEPEDDDENNRVTLLSTLINQGMTVERATMITKRAFPTCADKQKRSVHMDLLASGLSPGNVWSHACEEARTMGTNHMPNVSGDRGHAE</sequence>
<reference key="1">
    <citation type="journal article" date="1997" name="Arch. Virol.">
        <title>Molecular characterisation of the 3'-end of the astrovirus genome.</title>
        <authorList>
            <person name="Monceyron C."/>
            <person name="Grinde B."/>
            <person name="Jonassen T.O."/>
        </authorList>
    </citation>
    <scope>NUCLEOTIDE SEQUENCE [GENOMIC RNA]</scope>
</reference>
<feature type="chain" id="PRO_0000320237" description="Capsid polyprotein VP90">
    <location>
        <begin position="1"/>
        <end position="791"/>
    </location>
</feature>
<feature type="chain" id="PRO_0000419578" description="Capsid polyprotein VP70" evidence="4">
    <location>
        <begin position="1"/>
        <end position="657"/>
    </location>
</feature>
<feature type="chain" id="PRO_0000419579" description="Core protein VP34" evidence="4">
    <location>
        <begin position="1"/>
        <end position="314"/>
    </location>
</feature>
<feature type="chain" id="PRO_0000419580" description="Spike protein VP27" evidence="4">
    <location>
        <begin position="395"/>
        <end position="648"/>
    </location>
</feature>
<feature type="chain" id="PRO_0000419581" description="Spike protein VP25" evidence="4">
    <location>
        <begin position="425"/>
        <end position="648"/>
    </location>
</feature>
<feature type="region of interest" description="Basic" evidence="3">
    <location>
        <begin position="1"/>
        <end position="71"/>
    </location>
</feature>
<feature type="region of interest" description="Disordered" evidence="5">
    <location>
        <begin position="1"/>
        <end position="55"/>
    </location>
</feature>
<feature type="region of interest" description="Inner core" evidence="3">
    <location>
        <begin position="72"/>
        <end position="264"/>
    </location>
</feature>
<feature type="region of interest" description="Core attachment" evidence="3">
    <location>
        <begin position="395"/>
        <end position="424"/>
    </location>
</feature>
<feature type="region of interest" description="P2 globular domain" evidence="3">
    <location>
        <begin position="425"/>
        <end position="648"/>
    </location>
</feature>
<feature type="region of interest" description="Acidic" evidence="3">
    <location>
        <begin position="649"/>
        <end position="791"/>
    </location>
</feature>
<feature type="region of interest" description="Disordered" evidence="5">
    <location>
        <begin position="677"/>
        <end position="713"/>
    </location>
</feature>
<feature type="compositionally biased region" description="Basic residues" evidence="5">
    <location>
        <begin position="20"/>
        <end position="36"/>
    </location>
</feature>
<feature type="compositionally biased region" description="Acidic residues" evidence="5">
    <location>
        <begin position="677"/>
        <end position="694"/>
    </location>
</feature>
<feature type="site" description="Cleavage" evidence="3">
    <location>
        <begin position="314"/>
        <end position="315"/>
    </location>
</feature>
<feature type="site" description="Cleavage" evidence="3">
    <location>
        <begin position="394"/>
        <end position="395"/>
    </location>
</feature>
<feature type="site" description="Cleavage" evidence="3">
    <location>
        <begin position="424"/>
        <end position="425"/>
    </location>
</feature>
<feature type="site" description="Cleavage" evidence="3">
    <location>
        <begin position="648"/>
        <end position="649"/>
    </location>
</feature>
<feature type="site" description="Cleavage" evidence="4">
    <location>
        <begin position="657"/>
        <end position="658"/>
    </location>
</feature>
<gene>
    <name type="ORF">ORF2</name>
</gene>
<protein>
    <recommendedName>
        <fullName>Capsid polyprotein VP90</fullName>
    </recommendedName>
    <component>
        <recommendedName>
            <fullName>Capsid polyprotein VP70</fullName>
        </recommendedName>
    </component>
    <component>
        <recommendedName>
            <fullName>Core protein VP34</fullName>
        </recommendedName>
    </component>
    <component>
        <recommendedName>
            <fullName>Spike protein VP27</fullName>
        </recommendedName>
    </component>
    <component>
        <recommendedName>
            <fullName>Spike protein VP25</fullName>
        </recommendedName>
    </component>
</protein>
<keyword id="KW-0167">Capsid protein</keyword>
<keyword id="KW-1165">Clathrin-mediated endocytosis of virus by host</keyword>
<keyword id="KW-1142">T=3 icosahedral capsid protein</keyword>
<keyword id="KW-1162">Viral penetration into host cytoplasm</keyword>
<keyword id="KW-0946">Virion</keyword>
<keyword id="KW-1164">Virus endocytosis by host</keyword>
<keyword id="KW-1160">Virus entry into host cell</keyword>
<organism>
    <name type="scientific">Human astrovirus-7</name>
    <name type="common">HAstV-7</name>
    <dbReference type="NCBI Taxonomy" id="38950"/>
    <lineage>
        <taxon>Viruses</taxon>
        <taxon>Riboviria</taxon>
        <taxon>Orthornavirae</taxon>
        <taxon>Pisuviricota</taxon>
        <taxon>Stelpaviricetes</taxon>
        <taxon>Stellavirales</taxon>
        <taxon>Astroviridae</taxon>
        <taxon>Mamastrovirus</taxon>
        <taxon>Mamastrovirus 1</taxon>
    </lineage>
</organism>
<dbReference type="EMBL" id="Y08632">
    <property type="protein sequence ID" value="CAA69922.2"/>
    <property type="molecule type" value="Genomic_RNA"/>
</dbReference>
<dbReference type="SMR" id="Q96818"/>
<dbReference type="GO" id="GO:0043655">
    <property type="term" value="C:host extracellular space"/>
    <property type="evidence" value="ECO:0007669"/>
    <property type="project" value="UniProtKB-SubCell"/>
</dbReference>
<dbReference type="GO" id="GO:0039617">
    <property type="term" value="C:T=3 icosahedral viral capsid"/>
    <property type="evidence" value="ECO:0000250"/>
    <property type="project" value="UniProtKB"/>
</dbReference>
<dbReference type="GO" id="GO:0075512">
    <property type="term" value="P:clathrin-dependent endocytosis of virus by host cell"/>
    <property type="evidence" value="ECO:0000250"/>
    <property type="project" value="UniProtKB"/>
</dbReference>
<dbReference type="FunFam" id="2.60.120.20:FF:000007">
    <property type="entry name" value="Capsid polyprotein VP90"/>
    <property type="match status" value="1"/>
</dbReference>
<dbReference type="Gene3D" id="2.60.120.20">
    <property type="match status" value="1"/>
</dbReference>
<dbReference type="InterPro" id="IPR004337">
    <property type="entry name" value="Astro_capsid_N"/>
</dbReference>
<dbReference type="InterPro" id="IPR022027">
    <property type="entry name" value="Astro_capsid_p"/>
</dbReference>
<dbReference type="InterPro" id="IPR029053">
    <property type="entry name" value="Viral_coat"/>
</dbReference>
<dbReference type="Pfam" id="PF03115">
    <property type="entry name" value="Astro_capsid_N"/>
    <property type="match status" value="1"/>
</dbReference>
<dbReference type="Pfam" id="PF12226">
    <property type="entry name" value="Astro_capsid_p"/>
    <property type="match status" value="1"/>
</dbReference>